<dbReference type="EC" id="2.1.3.15" evidence="1"/>
<dbReference type="EMBL" id="AF197933">
    <property type="protein sequence ID" value="AAF98281.1"/>
    <property type="molecule type" value="Genomic_DNA"/>
</dbReference>
<dbReference type="EMBL" id="AE007317">
    <property type="protein sequence ID" value="AAK99191.1"/>
    <property type="molecule type" value="Genomic_DNA"/>
</dbReference>
<dbReference type="PIR" id="C97920">
    <property type="entry name" value="C97920"/>
</dbReference>
<dbReference type="RefSeq" id="NP_357981.1">
    <property type="nucleotide sequence ID" value="NC_003098.1"/>
</dbReference>
<dbReference type="RefSeq" id="WP_001017399.1">
    <property type="nucleotide sequence ID" value="NC_003098.1"/>
</dbReference>
<dbReference type="SMR" id="Q8DR13"/>
<dbReference type="STRING" id="171101.spr0387"/>
<dbReference type="DNASU" id="934683"/>
<dbReference type="KEGG" id="spr:spr0387"/>
<dbReference type="PATRIC" id="fig|171101.6.peg.428"/>
<dbReference type="eggNOG" id="COG0825">
    <property type="taxonomic scope" value="Bacteria"/>
</dbReference>
<dbReference type="HOGENOM" id="CLU_015486_0_2_9"/>
<dbReference type="UniPathway" id="UPA00655">
    <property type="reaction ID" value="UER00711"/>
</dbReference>
<dbReference type="Proteomes" id="UP000000586">
    <property type="component" value="Chromosome"/>
</dbReference>
<dbReference type="GO" id="GO:0009317">
    <property type="term" value="C:acetyl-CoA carboxylase complex"/>
    <property type="evidence" value="ECO:0007669"/>
    <property type="project" value="InterPro"/>
</dbReference>
<dbReference type="GO" id="GO:0003989">
    <property type="term" value="F:acetyl-CoA carboxylase activity"/>
    <property type="evidence" value="ECO:0007669"/>
    <property type="project" value="InterPro"/>
</dbReference>
<dbReference type="GO" id="GO:0005524">
    <property type="term" value="F:ATP binding"/>
    <property type="evidence" value="ECO:0007669"/>
    <property type="project" value="UniProtKB-KW"/>
</dbReference>
<dbReference type="GO" id="GO:0016743">
    <property type="term" value="F:carboxyl- or carbamoyltransferase activity"/>
    <property type="evidence" value="ECO:0007669"/>
    <property type="project" value="UniProtKB-UniRule"/>
</dbReference>
<dbReference type="GO" id="GO:0006633">
    <property type="term" value="P:fatty acid biosynthetic process"/>
    <property type="evidence" value="ECO:0007669"/>
    <property type="project" value="UniProtKB-KW"/>
</dbReference>
<dbReference type="GO" id="GO:2001295">
    <property type="term" value="P:malonyl-CoA biosynthetic process"/>
    <property type="evidence" value="ECO:0007669"/>
    <property type="project" value="UniProtKB-UniRule"/>
</dbReference>
<dbReference type="Gene3D" id="3.90.226.10">
    <property type="entry name" value="2-enoyl-CoA Hydratase, Chain A, domain 1"/>
    <property type="match status" value="1"/>
</dbReference>
<dbReference type="HAMAP" id="MF_00823">
    <property type="entry name" value="AcetylCoA_CT_alpha"/>
    <property type="match status" value="1"/>
</dbReference>
<dbReference type="InterPro" id="IPR001095">
    <property type="entry name" value="Acetyl_CoA_COase_a_su"/>
</dbReference>
<dbReference type="InterPro" id="IPR029045">
    <property type="entry name" value="ClpP/crotonase-like_dom_sf"/>
</dbReference>
<dbReference type="InterPro" id="IPR011763">
    <property type="entry name" value="COA_CT_C"/>
</dbReference>
<dbReference type="NCBIfam" id="TIGR00513">
    <property type="entry name" value="accA"/>
    <property type="match status" value="1"/>
</dbReference>
<dbReference type="NCBIfam" id="NF041504">
    <property type="entry name" value="AccA_sub"/>
    <property type="match status" value="1"/>
</dbReference>
<dbReference type="NCBIfam" id="NF004344">
    <property type="entry name" value="PRK05724.1"/>
    <property type="match status" value="1"/>
</dbReference>
<dbReference type="NCBIfam" id="NF008971">
    <property type="entry name" value="PRK12319.1"/>
    <property type="match status" value="1"/>
</dbReference>
<dbReference type="PANTHER" id="PTHR42853">
    <property type="entry name" value="ACETYL-COENZYME A CARBOXYLASE CARBOXYL TRANSFERASE SUBUNIT ALPHA"/>
    <property type="match status" value="1"/>
</dbReference>
<dbReference type="PANTHER" id="PTHR42853:SF3">
    <property type="entry name" value="ACETYL-COENZYME A CARBOXYLASE CARBOXYL TRANSFERASE SUBUNIT ALPHA, CHLOROPLASTIC"/>
    <property type="match status" value="1"/>
</dbReference>
<dbReference type="Pfam" id="PF03255">
    <property type="entry name" value="ACCA"/>
    <property type="match status" value="1"/>
</dbReference>
<dbReference type="PRINTS" id="PR01069">
    <property type="entry name" value="ACCCTRFRASEA"/>
</dbReference>
<dbReference type="SUPFAM" id="SSF52096">
    <property type="entry name" value="ClpP/crotonase"/>
    <property type="match status" value="1"/>
</dbReference>
<dbReference type="PROSITE" id="PS50989">
    <property type="entry name" value="COA_CT_CTER"/>
    <property type="match status" value="1"/>
</dbReference>
<organism>
    <name type="scientific">Streptococcus pneumoniae (strain ATCC BAA-255 / R6)</name>
    <dbReference type="NCBI Taxonomy" id="171101"/>
    <lineage>
        <taxon>Bacteria</taxon>
        <taxon>Bacillati</taxon>
        <taxon>Bacillota</taxon>
        <taxon>Bacilli</taxon>
        <taxon>Lactobacillales</taxon>
        <taxon>Streptococcaceae</taxon>
        <taxon>Streptococcus</taxon>
    </lineage>
</organism>
<name>ACCA_STRR6</name>
<protein>
    <recommendedName>
        <fullName evidence="1">Acetyl-coenzyme A carboxylase carboxyl transferase subunit alpha</fullName>
        <shortName evidence="1">ACCase subunit alpha</shortName>
        <shortName evidence="1">Acetyl-CoA carboxylase carboxyltransferase subunit alpha</shortName>
        <ecNumber evidence="1">2.1.3.15</ecNumber>
    </recommendedName>
</protein>
<gene>
    <name evidence="1" type="primary">accA</name>
    <name type="ordered locus">spr0387</name>
</gene>
<accession>Q8DR13</accession>
<reference key="1">
    <citation type="journal article" date="2000" name="Nature">
        <title>A triclosan-resistant bacterial enzyme.</title>
        <authorList>
            <person name="Heath R.J."/>
            <person name="Rock C.O."/>
        </authorList>
    </citation>
    <scope>NUCLEOTIDE SEQUENCE [GENOMIC DNA]</scope>
</reference>
<reference key="2">
    <citation type="journal article" date="2001" name="J. Bacteriol.">
        <title>Genome of the bacterium Streptococcus pneumoniae strain R6.</title>
        <authorList>
            <person name="Hoskins J."/>
            <person name="Alborn W.E. Jr."/>
            <person name="Arnold J."/>
            <person name="Blaszczak L.C."/>
            <person name="Burgett S."/>
            <person name="DeHoff B.S."/>
            <person name="Estrem S.T."/>
            <person name="Fritz L."/>
            <person name="Fu D.-J."/>
            <person name="Fuller W."/>
            <person name="Geringer C."/>
            <person name="Gilmour R."/>
            <person name="Glass J.S."/>
            <person name="Khoja H."/>
            <person name="Kraft A.R."/>
            <person name="Lagace R.E."/>
            <person name="LeBlanc D.J."/>
            <person name="Lee L.N."/>
            <person name="Lefkowitz E.J."/>
            <person name="Lu J."/>
            <person name="Matsushima P."/>
            <person name="McAhren S.M."/>
            <person name="McHenney M."/>
            <person name="McLeaster K."/>
            <person name="Mundy C.W."/>
            <person name="Nicas T.I."/>
            <person name="Norris F.H."/>
            <person name="O'Gara M."/>
            <person name="Peery R.B."/>
            <person name="Robertson G.T."/>
            <person name="Rockey P."/>
            <person name="Sun P.-M."/>
            <person name="Winkler M.E."/>
            <person name="Yang Y."/>
            <person name="Young-Bellido M."/>
            <person name="Zhao G."/>
            <person name="Zook C.A."/>
            <person name="Baltz R.H."/>
            <person name="Jaskunas S.R."/>
            <person name="Rosteck P.R. Jr."/>
            <person name="Skatrud P.L."/>
            <person name="Glass J.I."/>
        </authorList>
    </citation>
    <scope>NUCLEOTIDE SEQUENCE [LARGE SCALE GENOMIC DNA]</scope>
    <source>
        <strain>ATCC BAA-255 / R6</strain>
    </source>
</reference>
<sequence>MNIAKIVREAREQSRLTTLDFATGIFDEFIQLHGDRSFRDDGAVVGGIGWLGDQAVTVVGIQKGKSLQDNLKRNFGQPHPEGYRKALRLMKQAEKFGRPVVTFINTAGAYPGVGAEERGQGEAIARNLMEMSDLKVPIIAIIIGEGGSGGALALAVADRVWMLENSIYAILSPEGFASILWKDGTRAMEAAELMKITSHELLEMDVVDKVISEVGLSSKELIKSVKKELQTELARLSQKPLEELLEERYQRFRKY</sequence>
<keyword id="KW-0067">ATP-binding</keyword>
<keyword id="KW-0963">Cytoplasm</keyword>
<keyword id="KW-0275">Fatty acid biosynthesis</keyword>
<keyword id="KW-0276">Fatty acid metabolism</keyword>
<keyword id="KW-0444">Lipid biosynthesis</keyword>
<keyword id="KW-0443">Lipid metabolism</keyword>
<keyword id="KW-0547">Nucleotide-binding</keyword>
<keyword id="KW-1185">Reference proteome</keyword>
<keyword id="KW-0808">Transferase</keyword>
<evidence type="ECO:0000255" key="1">
    <source>
        <dbReference type="HAMAP-Rule" id="MF_00823"/>
    </source>
</evidence>
<evidence type="ECO:0000255" key="2">
    <source>
        <dbReference type="PROSITE-ProRule" id="PRU01137"/>
    </source>
</evidence>
<evidence type="ECO:0000305" key="3"/>
<comment type="function">
    <text evidence="1">Component of the acetyl coenzyme A carboxylase (ACC) complex. First, biotin carboxylase catalyzes the carboxylation of biotin on its carrier protein (BCCP) and then the CO(2) group is transferred by the carboxyltransferase to acetyl-CoA to form malonyl-CoA.</text>
</comment>
<comment type="catalytic activity">
    <reaction evidence="1">
        <text>N(6)-carboxybiotinyl-L-lysyl-[protein] + acetyl-CoA = N(6)-biotinyl-L-lysyl-[protein] + malonyl-CoA</text>
        <dbReference type="Rhea" id="RHEA:54728"/>
        <dbReference type="Rhea" id="RHEA-COMP:10505"/>
        <dbReference type="Rhea" id="RHEA-COMP:10506"/>
        <dbReference type="ChEBI" id="CHEBI:57288"/>
        <dbReference type="ChEBI" id="CHEBI:57384"/>
        <dbReference type="ChEBI" id="CHEBI:83144"/>
        <dbReference type="ChEBI" id="CHEBI:83145"/>
        <dbReference type="EC" id="2.1.3.15"/>
    </reaction>
</comment>
<comment type="pathway">
    <text evidence="1">Lipid metabolism; malonyl-CoA biosynthesis; malonyl-CoA from acetyl-CoA: step 1/1.</text>
</comment>
<comment type="subunit">
    <text evidence="1">Acetyl-CoA carboxylase is a heterohexamer composed of biotin carboxyl carrier protein (AccB), biotin carboxylase (AccC) and two subunits each of ACCase subunit alpha (AccA) and ACCase subunit beta (AccD).</text>
</comment>
<comment type="subcellular location">
    <subcellularLocation>
        <location evidence="1">Cytoplasm</location>
    </subcellularLocation>
</comment>
<comment type="similarity">
    <text evidence="1">Belongs to the AccA family.</text>
</comment>
<feature type="chain" id="PRO_0000223837" description="Acetyl-coenzyme A carboxylase carboxyl transferase subunit alpha">
    <location>
        <begin position="1"/>
        <end position="255"/>
    </location>
</feature>
<feature type="domain" description="CoA carboxyltransferase C-terminal" evidence="2">
    <location>
        <begin position="1"/>
        <end position="235"/>
    </location>
</feature>
<feature type="sequence conflict" description="In Ref. 1; AAF98281." evidence="3" ref="1">
    <original>V</original>
    <variation>I</variation>
    <location>
        <position position="214"/>
    </location>
</feature>
<proteinExistence type="inferred from homology"/>